<name>LON_ANADE</name>
<evidence type="ECO:0000255" key="1">
    <source>
        <dbReference type="HAMAP-Rule" id="MF_01973"/>
    </source>
</evidence>
<evidence type="ECO:0000255" key="2">
    <source>
        <dbReference type="PROSITE-ProRule" id="PRU01122"/>
    </source>
</evidence>
<evidence type="ECO:0000255" key="3">
    <source>
        <dbReference type="PROSITE-ProRule" id="PRU01123"/>
    </source>
</evidence>
<evidence type="ECO:0000256" key="4">
    <source>
        <dbReference type="SAM" id="MobiDB-lite"/>
    </source>
</evidence>
<protein>
    <recommendedName>
        <fullName evidence="1">Lon protease</fullName>
        <ecNumber evidence="1">3.4.21.53</ecNumber>
    </recommendedName>
    <alternativeName>
        <fullName evidence="1">ATP-dependent protease La</fullName>
    </alternativeName>
</protein>
<reference key="1">
    <citation type="submission" date="2006-01" db="EMBL/GenBank/DDBJ databases">
        <title>Complete sequence of Anaeromyxobacter dehalogenans 2CP-C.</title>
        <authorList>
            <person name="Copeland A."/>
            <person name="Lucas S."/>
            <person name="Lapidus A."/>
            <person name="Barry K."/>
            <person name="Detter J.C."/>
            <person name="Glavina T."/>
            <person name="Hammon N."/>
            <person name="Israni S."/>
            <person name="Pitluck S."/>
            <person name="Brettin T."/>
            <person name="Bruce D."/>
            <person name="Han C."/>
            <person name="Tapia R."/>
            <person name="Gilna P."/>
            <person name="Kiss H."/>
            <person name="Schmutz J."/>
            <person name="Larimer F."/>
            <person name="Land M."/>
            <person name="Kyrpides N."/>
            <person name="Anderson I."/>
            <person name="Sanford R.A."/>
            <person name="Ritalahti K.M."/>
            <person name="Thomas H.S."/>
            <person name="Kirby J.R."/>
            <person name="Zhulin I.B."/>
            <person name="Loeffler F.E."/>
            <person name="Richardson P."/>
        </authorList>
    </citation>
    <scope>NUCLEOTIDE SEQUENCE [LARGE SCALE GENOMIC DNA]</scope>
    <source>
        <strain>2CP-C</strain>
    </source>
</reference>
<proteinExistence type="inferred from homology"/>
<dbReference type="EC" id="3.4.21.53" evidence="1"/>
<dbReference type="EMBL" id="CP000251">
    <property type="protein sequence ID" value="ABC81480.1"/>
    <property type="molecule type" value="Genomic_DNA"/>
</dbReference>
<dbReference type="SMR" id="Q2IIK1"/>
<dbReference type="STRING" id="290397.Adeh_1707"/>
<dbReference type="KEGG" id="ade:Adeh_1707"/>
<dbReference type="eggNOG" id="COG0466">
    <property type="taxonomic scope" value="Bacteria"/>
</dbReference>
<dbReference type="HOGENOM" id="CLU_004109_4_3_7"/>
<dbReference type="Proteomes" id="UP000001935">
    <property type="component" value="Chromosome"/>
</dbReference>
<dbReference type="GO" id="GO:0005737">
    <property type="term" value="C:cytoplasm"/>
    <property type="evidence" value="ECO:0007669"/>
    <property type="project" value="UniProtKB-SubCell"/>
</dbReference>
<dbReference type="GO" id="GO:0005524">
    <property type="term" value="F:ATP binding"/>
    <property type="evidence" value="ECO:0007669"/>
    <property type="project" value="UniProtKB-UniRule"/>
</dbReference>
<dbReference type="GO" id="GO:0016887">
    <property type="term" value="F:ATP hydrolysis activity"/>
    <property type="evidence" value="ECO:0007669"/>
    <property type="project" value="UniProtKB-UniRule"/>
</dbReference>
<dbReference type="GO" id="GO:0004176">
    <property type="term" value="F:ATP-dependent peptidase activity"/>
    <property type="evidence" value="ECO:0007669"/>
    <property type="project" value="UniProtKB-UniRule"/>
</dbReference>
<dbReference type="GO" id="GO:0043565">
    <property type="term" value="F:sequence-specific DNA binding"/>
    <property type="evidence" value="ECO:0007669"/>
    <property type="project" value="UniProtKB-UniRule"/>
</dbReference>
<dbReference type="GO" id="GO:0004252">
    <property type="term" value="F:serine-type endopeptidase activity"/>
    <property type="evidence" value="ECO:0007669"/>
    <property type="project" value="UniProtKB-UniRule"/>
</dbReference>
<dbReference type="GO" id="GO:0034605">
    <property type="term" value="P:cellular response to heat"/>
    <property type="evidence" value="ECO:0007669"/>
    <property type="project" value="UniProtKB-UniRule"/>
</dbReference>
<dbReference type="GO" id="GO:0006515">
    <property type="term" value="P:protein quality control for misfolded or incompletely synthesized proteins"/>
    <property type="evidence" value="ECO:0007669"/>
    <property type="project" value="UniProtKB-UniRule"/>
</dbReference>
<dbReference type="CDD" id="cd19500">
    <property type="entry name" value="RecA-like_Lon"/>
    <property type="match status" value="1"/>
</dbReference>
<dbReference type="FunFam" id="1.20.5.5270:FF:000002">
    <property type="entry name" value="Lon protease homolog"/>
    <property type="match status" value="1"/>
</dbReference>
<dbReference type="FunFam" id="3.30.230.10:FF:000019">
    <property type="entry name" value="Lon protease homolog 2, peroxisomal"/>
    <property type="match status" value="1"/>
</dbReference>
<dbReference type="FunFam" id="3.40.50.300:FF:000382">
    <property type="entry name" value="Lon protease homolog 2, peroxisomal"/>
    <property type="match status" value="1"/>
</dbReference>
<dbReference type="Gene3D" id="1.10.8.60">
    <property type="match status" value="1"/>
</dbReference>
<dbReference type="Gene3D" id="1.20.5.5270">
    <property type="match status" value="1"/>
</dbReference>
<dbReference type="Gene3D" id="1.20.58.1480">
    <property type="match status" value="1"/>
</dbReference>
<dbReference type="Gene3D" id="3.30.230.10">
    <property type="match status" value="1"/>
</dbReference>
<dbReference type="Gene3D" id="2.30.130.40">
    <property type="entry name" value="LON domain-like"/>
    <property type="match status" value="1"/>
</dbReference>
<dbReference type="Gene3D" id="3.40.50.300">
    <property type="entry name" value="P-loop containing nucleotide triphosphate hydrolases"/>
    <property type="match status" value="1"/>
</dbReference>
<dbReference type="HAMAP" id="MF_01973">
    <property type="entry name" value="lon_bact"/>
    <property type="match status" value="1"/>
</dbReference>
<dbReference type="InterPro" id="IPR003593">
    <property type="entry name" value="AAA+_ATPase"/>
</dbReference>
<dbReference type="InterPro" id="IPR003959">
    <property type="entry name" value="ATPase_AAA_core"/>
</dbReference>
<dbReference type="InterPro" id="IPR027543">
    <property type="entry name" value="Lon_bac"/>
</dbReference>
<dbReference type="InterPro" id="IPR004815">
    <property type="entry name" value="Lon_bac/euk-typ"/>
</dbReference>
<dbReference type="InterPro" id="IPR054594">
    <property type="entry name" value="Lon_lid"/>
</dbReference>
<dbReference type="InterPro" id="IPR008269">
    <property type="entry name" value="Lon_proteolytic"/>
</dbReference>
<dbReference type="InterPro" id="IPR027065">
    <property type="entry name" value="Lon_Prtase"/>
</dbReference>
<dbReference type="InterPro" id="IPR003111">
    <property type="entry name" value="Lon_prtase_N"/>
</dbReference>
<dbReference type="InterPro" id="IPR046336">
    <property type="entry name" value="Lon_prtase_N_sf"/>
</dbReference>
<dbReference type="InterPro" id="IPR027417">
    <property type="entry name" value="P-loop_NTPase"/>
</dbReference>
<dbReference type="InterPro" id="IPR008268">
    <property type="entry name" value="Peptidase_S16_AS"/>
</dbReference>
<dbReference type="InterPro" id="IPR015947">
    <property type="entry name" value="PUA-like_sf"/>
</dbReference>
<dbReference type="InterPro" id="IPR020568">
    <property type="entry name" value="Ribosomal_Su5_D2-typ_SF"/>
</dbReference>
<dbReference type="InterPro" id="IPR014721">
    <property type="entry name" value="Ribsml_uS5_D2-typ_fold_subgr"/>
</dbReference>
<dbReference type="NCBIfam" id="TIGR00763">
    <property type="entry name" value="lon"/>
    <property type="match status" value="1"/>
</dbReference>
<dbReference type="PANTHER" id="PTHR10046">
    <property type="entry name" value="ATP DEPENDENT LON PROTEASE FAMILY MEMBER"/>
    <property type="match status" value="1"/>
</dbReference>
<dbReference type="Pfam" id="PF00004">
    <property type="entry name" value="AAA"/>
    <property type="match status" value="1"/>
</dbReference>
<dbReference type="Pfam" id="PF05362">
    <property type="entry name" value="Lon_C"/>
    <property type="match status" value="1"/>
</dbReference>
<dbReference type="Pfam" id="PF22667">
    <property type="entry name" value="Lon_lid"/>
    <property type="match status" value="1"/>
</dbReference>
<dbReference type="Pfam" id="PF02190">
    <property type="entry name" value="LON_substr_bdg"/>
    <property type="match status" value="1"/>
</dbReference>
<dbReference type="PIRSF" id="PIRSF001174">
    <property type="entry name" value="Lon_proteas"/>
    <property type="match status" value="1"/>
</dbReference>
<dbReference type="PRINTS" id="PR00830">
    <property type="entry name" value="ENDOLAPTASE"/>
</dbReference>
<dbReference type="SMART" id="SM00382">
    <property type="entry name" value="AAA"/>
    <property type="match status" value="1"/>
</dbReference>
<dbReference type="SMART" id="SM00464">
    <property type="entry name" value="LON"/>
    <property type="match status" value="1"/>
</dbReference>
<dbReference type="SUPFAM" id="SSF52540">
    <property type="entry name" value="P-loop containing nucleoside triphosphate hydrolases"/>
    <property type="match status" value="1"/>
</dbReference>
<dbReference type="SUPFAM" id="SSF88697">
    <property type="entry name" value="PUA domain-like"/>
    <property type="match status" value="1"/>
</dbReference>
<dbReference type="SUPFAM" id="SSF54211">
    <property type="entry name" value="Ribosomal protein S5 domain 2-like"/>
    <property type="match status" value="1"/>
</dbReference>
<dbReference type="PROSITE" id="PS51787">
    <property type="entry name" value="LON_N"/>
    <property type="match status" value="1"/>
</dbReference>
<dbReference type="PROSITE" id="PS51786">
    <property type="entry name" value="LON_PROTEOLYTIC"/>
    <property type="match status" value="1"/>
</dbReference>
<dbReference type="PROSITE" id="PS01046">
    <property type="entry name" value="LON_SER"/>
    <property type="match status" value="1"/>
</dbReference>
<keyword id="KW-0067">ATP-binding</keyword>
<keyword id="KW-0963">Cytoplasm</keyword>
<keyword id="KW-0378">Hydrolase</keyword>
<keyword id="KW-0547">Nucleotide-binding</keyword>
<keyword id="KW-0645">Protease</keyword>
<keyword id="KW-1185">Reference proteome</keyword>
<keyword id="KW-0720">Serine protease</keyword>
<keyword id="KW-0346">Stress response</keyword>
<comment type="function">
    <text evidence="1">ATP-dependent serine protease that mediates the selective degradation of mutant and abnormal proteins as well as certain short-lived regulatory proteins. Required for cellular homeostasis and for survival from DNA damage and developmental changes induced by stress. Degrades polypeptides processively to yield small peptide fragments that are 5 to 10 amino acids long. Binds to DNA in a double-stranded, site-specific manner.</text>
</comment>
<comment type="catalytic activity">
    <reaction evidence="1">
        <text>Hydrolysis of proteins in presence of ATP.</text>
        <dbReference type="EC" id="3.4.21.53"/>
    </reaction>
</comment>
<comment type="subunit">
    <text evidence="1">Homohexamer. Organized in a ring with a central cavity.</text>
</comment>
<comment type="subcellular location">
    <subcellularLocation>
        <location evidence="1">Cytoplasm</location>
    </subcellularLocation>
</comment>
<comment type="induction">
    <text evidence="1">By heat shock.</text>
</comment>
<comment type="similarity">
    <text evidence="1">Belongs to the peptidase S16 family.</text>
</comment>
<sequence>MRERKETAMSDKEKKGAGAGAQVAPAMGPPVLINKEDIPAVLPILPLRNSVFFPGGVLPLAVGRQKTIALIKDAVRDEQVIGVVTQRRAEEEDPGAADLYTVGTVARVVKLLKMGEDNYSLVVQGLARFKVLELVQESPYLKARIEAVEDRSVVDDVEVEALAINLKKLAREVIELMPELPAAATELVESITHPGHLADLIAANVDVPIEEKQQVLETVELKARMKLVLELLNRKREILKLSNKIDSAVKGEMSKTQREYYLRQQLKAIKEELGELGEEEEELDELQERLKKAGLPPEVEKVAQKELNRLKSIPTASSEYTVARTYLDWIADLPWTKRTDDNLDIENARQILDTDHYGLDKIKKRILEYLAVRKLKNDMRGPILCFVGPPGVGKTSLGQSIARATGRKFVRLSLGGVRDEAEIRGHRRTYVGALPGRIIQSMKKAATVNPVMMLDEIDKLGADFRGDPSAALLEVLDPEQNHAFSDHYLDLSYDLSKVMFIGTANLLDPIPGPLKDRMEILELPGYTFEEKVHIAQNHLIPKQLREHGLSADAIAISEKALIKIIMAYTREAGVRNLERRIADVCRAIAVEVASGKIGASAKRSIEEADVLEILGPEKFYNETAERTEIAGVATGLAWTAAGGDILFIEATKMPGKGALTLTGQLGDVMKESAQAALSYLRSKSDSLGIPVNFLEKTDLHIHFPAGAIPKDGPSAGVTILTALVSLLTGIRVRSDVAMTGEVTLRGLVLPVGGIKEKVLAAHRAGIKRIIIPARNEKDLLDVPEQARKELEFVFAAHMDEVLQAALEENPVGRKPPAAPEPEGEKKPGATPTPPAKKPDEIRV</sequence>
<accession>Q2IIK1</accession>
<gene>
    <name evidence="1" type="primary">lon</name>
    <name type="ordered locus">Adeh_1707</name>
</gene>
<organism>
    <name type="scientific">Anaeromyxobacter dehalogenans (strain 2CP-C)</name>
    <dbReference type="NCBI Taxonomy" id="290397"/>
    <lineage>
        <taxon>Bacteria</taxon>
        <taxon>Pseudomonadati</taxon>
        <taxon>Myxococcota</taxon>
        <taxon>Myxococcia</taxon>
        <taxon>Myxococcales</taxon>
        <taxon>Cystobacterineae</taxon>
        <taxon>Anaeromyxobacteraceae</taxon>
        <taxon>Anaeromyxobacter</taxon>
    </lineage>
</organism>
<feature type="chain" id="PRO_0000396533" description="Lon protease">
    <location>
        <begin position="1"/>
        <end position="843"/>
    </location>
</feature>
<feature type="domain" description="Lon N-terminal" evidence="3">
    <location>
        <begin position="42"/>
        <end position="236"/>
    </location>
</feature>
<feature type="domain" description="Lon proteolytic" evidence="2">
    <location>
        <begin position="627"/>
        <end position="808"/>
    </location>
</feature>
<feature type="region of interest" description="Disordered" evidence="4">
    <location>
        <begin position="1"/>
        <end position="22"/>
    </location>
</feature>
<feature type="region of interest" description="Disordered" evidence="4">
    <location>
        <begin position="805"/>
        <end position="843"/>
    </location>
</feature>
<feature type="compositionally biased region" description="Basic and acidic residues" evidence="4">
    <location>
        <begin position="1"/>
        <end position="16"/>
    </location>
</feature>
<feature type="active site" evidence="1">
    <location>
        <position position="714"/>
    </location>
</feature>
<feature type="active site" evidence="1">
    <location>
        <position position="757"/>
    </location>
</feature>
<feature type="binding site" evidence="1">
    <location>
        <begin position="388"/>
        <end position="395"/>
    </location>
    <ligand>
        <name>ATP</name>
        <dbReference type="ChEBI" id="CHEBI:30616"/>
    </ligand>
</feature>